<gene>
    <name type="primary">exgA</name>
    <name type="synonym">exg1</name>
    <name type="ORF">AN4052</name>
</gene>
<protein>
    <recommendedName>
        <fullName>Probable glucan 1,3-beta-glucosidase A</fullName>
        <ecNumber>3.2.1.58</ecNumber>
    </recommendedName>
    <alternativeName>
        <fullName>Exo-1,3-beta-glucanase 1</fullName>
    </alternativeName>
    <alternativeName>
        <fullName>Exo-1,3-beta-glucanase A</fullName>
    </alternativeName>
</protein>
<feature type="signal peptide" evidence="2">
    <location>
        <begin position="1"/>
        <end position="26"/>
    </location>
</feature>
<feature type="chain" id="PRO_0000393532" description="Probable glucan 1,3-beta-glucosidase A">
    <location>
        <begin position="27"/>
        <end position="405"/>
    </location>
</feature>
<feature type="active site" description="Proton donor" evidence="1">
    <location>
        <position position="198"/>
    </location>
</feature>
<feature type="active site" description="Nucleophile" evidence="1">
    <location>
        <position position="296"/>
    </location>
</feature>
<feature type="disulfide bond" evidence="1">
    <location>
        <begin position="278"/>
        <end position="403"/>
    </location>
</feature>
<feature type="disulfide bond" evidence="1">
    <location>
        <begin position="304"/>
        <end position="330"/>
    </location>
</feature>
<proteinExistence type="inferred from homology"/>
<sequence>MFPRISQAAILAHSLLAVCTSAATLAEKVRGVNLGGWLVLEPWITPSLFDEAGDEAVDEYTLTEVLGVEEAAARLSEHWNTFITEEDFALIAEAGLNYVRIPIGYWAAAPLDGEPYVSGQLEHLDNAVAWARAHNLKVIVDLHGAPGSQNGFDNSGRRGPIGWQQGDTVEQTILAFETLAQRYLADDDTVTMIEALNEPHVPGGINQDQLKDYYEETLARVRKNSPEATLLLHDGFVQTEGWNGFMTGENVMMDTHHYEVFEGGQNAWSIEKHIDAACQLGRQHLQAADKPVIVGEWTGALSDCTRYLNGKGIGIRYDGTLGSNTAVGACGSKSEGSVAGLSADEIANTRRFIEAQLDAFELRNGWVFWTWKTEGAPGWDMQDLLANGVFPQPLTDREFPNQCNF</sequence>
<name>EXGA_EMENI</name>
<accession>Q5B5X8</accession>
<accession>C8V5I6</accession>
<keyword id="KW-0119">Carbohydrate metabolism</keyword>
<keyword id="KW-0961">Cell wall biogenesis/degradation</keyword>
<keyword id="KW-1015">Disulfide bond</keyword>
<keyword id="KW-0326">Glycosidase</keyword>
<keyword id="KW-0378">Hydrolase</keyword>
<keyword id="KW-0464">Manganese</keyword>
<keyword id="KW-0479">Metal-binding</keyword>
<keyword id="KW-0624">Polysaccharide degradation</keyword>
<keyword id="KW-1185">Reference proteome</keyword>
<keyword id="KW-0964">Secreted</keyword>
<keyword id="KW-0732">Signal</keyword>
<organism>
    <name type="scientific">Emericella nidulans (strain FGSC A4 / ATCC 38163 / CBS 112.46 / NRRL 194 / M139)</name>
    <name type="common">Aspergillus nidulans</name>
    <dbReference type="NCBI Taxonomy" id="227321"/>
    <lineage>
        <taxon>Eukaryota</taxon>
        <taxon>Fungi</taxon>
        <taxon>Dikarya</taxon>
        <taxon>Ascomycota</taxon>
        <taxon>Pezizomycotina</taxon>
        <taxon>Eurotiomycetes</taxon>
        <taxon>Eurotiomycetidae</taxon>
        <taxon>Eurotiales</taxon>
        <taxon>Aspergillaceae</taxon>
        <taxon>Aspergillus</taxon>
        <taxon>Aspergillus subgen. Nidulantes</taxon>
    </lineage>
</organism>
<evidence type="ECO:0000250" key="1"/>
<evidence type="ECO:0000255" key="2"/>
<evidence type="ECO:0000305" key="3"/>
<reference key="1">
    <citation type="journal article" date="2005" name="Nature">
        <title>Sequencing of Aspergillus nidulans and comparative analysis with A. fumigatus and A. oryzae.</title>
        <authorList>
            <person name="Galagan J.E."/>
            <person name="Calvo S.E."/>
            <person name="Cuomo C."/>
            <person name="Ma L.-J."/>
            <person name="Wortman J.R."/>
            <person name="Batzoglou S."/>
            <person name="Lee S.-I."/>
            <person name="Bastuerkmen M."/>
            <person name="Spevak C.C."/>
            <person name="Clutterbuck J."/>
            <person name="Kapitonov V."/>
            <person name="Jurka J."/>
            <person name="Scazzocchio C."/>
            <person name="Farman M.L."/>
            <person name="Butler J."/>
            <person name="Purcell S."/>
            <person name="Harris S."/>
            <person name="Braus G.H."/>
            <person name="Draht O."/>
            <person name="Busch S."/>
            <person name="D'Enfert C."/>
            <person name="Bouchier C."/>
            <person name="Goldman G.H."/>
            <person name="Bell-Pedersen D."/>
            <person name="Griffiths-Jones S."/>
            <person name="Doonan J.H."/>
            <person name="Yu J."/>
            <person name="Vienken K."/>
            <person name="Pain A."/>
            <person name="Freitag M."/>
            <person name="Selker E.U."/>
            <person name="Archer D.B."/>
            <person name="Penalva M.A."/>
            <person name="Oakley B.R."/>
            <person name="Momany M."/>
            <person name="Tanaka T."/>
            <person name="Kumagai T."/>
            <person name="Asai K."/>
            <person name="Machida M."/>
            <person name="Nierman W.C."/>
            <person name="Denning D.W."/>
            <person name="Caddick M.X."/>
            <person name="Hynes M."/>
            <person name="Paoletti M."/>
            <person name="Fischer R."/>
            <person name="Miller B.L."/>
            <person name="Dyer P.S."/>
            <person name="Sachs M.S."/>
            <person name="Osmani S.A."/>
            <person name="Birren B.W."/>
        </authorList>
    </citation>
    <scope>NUCLEOTIDE SEQUENCE [LARGE SCALE GENOMIC DNA]</scope>
    <source>
        <strain>FGSC A4 / ATCC 38163 / CBS 112.46 / NRRL 194 / M139</strain>
    </source>
</reference>
<reference key="2">
    <citation type="journal article" date="2009" name="Fungal Genet. Biol.">
        <title>The 2008 update of the Aspergillus nidulans genome annotation: a community effort.</title>
        <authorList>
            <person name="Wortman J.R."/>
            <person name="Gilsenan J.M."/>
            <person name="Joardar V."/>
            <person name="Deegan J."/>
            <person name="Clutterbuck J."/>
            <person name="Andersen M.R."/>
            <person name="Archer D."/>
            <person name="Bencina M."/>
            <person name="Braus G."/>
            <person name="Coutinho P."/>
            <person name="von Dohren H."/>
            <person name="Doonan J."/>
            <person name="Driessen A.J."/>
            <person name="Durek P."/>
            <person name="Espeso E."/>
            <person name="Fekete E."/>
            <person name="Flipphi M."/>
            <person name="Estrada C.G."/>
            <person name="Geysens S."/>
            <person name="Goldman G."/>
            <person name="de Groot P.W."/>
            <person name="Hansen K."/>
            <person name="Harris S.D."/>
            <person name="Heinekamp T."/>
            <person name="Helmstaedt K."/>
            <person name="Henrissat B."/>
            <person name="Hofmann G."/>
            <person name="Homan T."/>
            <person name="Horio T."/>
            <person name="Horiuchi H."/>
            <person name="James S."/>
            <person name="Jones M."/>
            <person name="Karaffa L."/>
            <person name="Karanyi Z."/>
            <person name="Kato M."/>
            <person name="Keller N."/>
            <person name="Kelly D.E."/>
            <person name="Kiel J.A."/>
            <person name="Kim J.M."/>
            <person name="van der Klei I.J."/>
            <person name="Klis F.M."/>
            <person name="Kovalchuk A."/>
            <person name="Krasevec N."/>
            <person name="Kubicek C.P."/>
            <person name="Liu B."/>
            <person name="Maccabe A."/>
            <person name="Meyer V."/>
            <person name="Mirabito P."/>
            <person name="Miskei M."/>
            <person name="Mos M."/>
            <person name="Mullins J."/>
            <person name="Nelson D.R."/>
            <person name="Nielsen J."/>
            <person name="Oakley B.R."/>
            <person name="Osmani S.A."/>
            <person name="Pakula T."/>
            <person name="Paszewski A."/>
            <person name="Paulsen I."/>
            <person name="Pilsyk S."/>
            <person name="Pocsi I."/>
            <person name="Punt P.J."/>
            <person name="Ram A.F."/>
            <person name="Ren Q."/>
            <person name="Robellet X."/>
            <person name="Robson G."/>
            <person name="Seiboth B."/>
            <person name="van Solingen P."/>
            <person name="Specht T."/>
            <person name="Sun J."/>
            <person name="Taheri-Talesh N."/>
            <person name="Takeshita N."/>
            <person name="Ussery D."/>
            <person name="vanKuyk P.A."/>
            <person name="Visser H."/>
            <person name="van de Vondervoort P.J."/>
            <person name="de Vries R.P."/>
            <person name="Walton J."/>
            <person name="Xiang X."/>
            <person name="Xiong Y."/>
            <person name="Zeng A.P."/>
            <person name="Brandt B.W."/>
            <person name="Cornell M.J."/>
            <person name="van den Hondel C.A."/>
            <person name="Visser J."/>
            <person name="Oliver S.G."/>
            <person name="Turner G."/>
        </authorList>
    </citation>
    <scope>GENOME REANNOTATION</scope>
    <source>
        <strain>FGSC A4 / ATCC 38163 / CBS 112.46 / NRRL 194 / M139</strain>
    </source>
</reference>
<dbReference type="EC" id="3.2.1.58"/>
<dbReference type="EMBL" id="AACD01000065">
    <property type="protein sequence ID" value="EAA59523.1"/>
    <property type="status" value="ALT_SEQ"/>
    <property type="molecule type" value="Genomic_DNA"/>
</dbReference>
<dbReference type="EMBL" id="BN001302">
    <property type="protein sequence ID" value="CBF74803.1"/>
    <property type="status" value="ALT_SEQ"/>
    <property type="molecule type" value="Genomic_DNA"/>
</dbReference>
<dbReference type="RefSeq" id="XP_661656.1">
    <property type="nucleotide sequence ID" value="XM_656564.1"/>
</dbReference>
<dbReference type="SMR" id="Q5B5X8"/>
<dbReference type="FunCoup" id="Q5B5X8">
    <property type="interactions" value="129"/>
</dbReference>
<dbReference type="STRING" id="227321.Q5B5X8"/>
<dbReference type="CAZy" id="GH5">
    <property type="family name" value="Glycoside Hydrolase Family 5"/>
</dbReference>
<dbReference type="KEGG" id="ani:ANIA_04052"/>
<dbReference type="eggNOG" id="ENOG502QPYU">
    <property type="taxonomic scope" value="Eukaryota"/>
</dbReference>
<dbReference type="HOGENOM" id="CLU_004624_0_1_1"/>
<dbReference type="InParanoid" id="Q5B5X8"/>
<dbReference type="OrthoDB" id="62120at2759"/>
<dbReference type="Proteomes" id="UP000000560">
    <property type="component" value="Chromosome II"/>
</dbReference>
<dbReference type="GO" id="GO:0005576">
    <property type="term" value="C:extracellular region"/>
    <property type="evidence" value="ECO:0000318"/>
    <property type="project" value="GO_Central"/>
</dbReference>
<dbReference type="GO" id="GO:0004338">
    <property type="term" value="F:glucan exo-1,3-beta-glucosidase activity"/>
    <property type="evidence" value="ECO:0000318"/>
    <property type="project" value="GO_Central"/>
</dbReference>
<dbReference type="GO" id="GO:0046872">
    <property type="term" value="F:metal ion binding"/>
    <property type="evidence" value="ECO:0007669"/>
    <property type="project" value="UniProtKB-KW"/>
</dbReference>
<dbReference type="GO" id="GO:0071555">
    <property type="term" value="P:cell wall organization"/>
    <property type="evidence" value="ECO:0007669"/>
    <property type="project" value="UniProtKB-KW"/>
</dbReference>
<dbReference type="GO" id="GO:0009251">
    <property type="term" value="P:glucan catabolic process"/>
    <property type="evidence" value="ECO:0000318"/>
    <property type="project" value="GO_Central"/>
</dbReference>
<dbReference type="FunFam" id="3.20.20.80:FF:000033">
    <property type="entry name" value="Glucan 1,3-beta-glucosidase A"/>
    <property type="match status" value="1"/>
</dbReference>
<dbReference type="Gene3D" id="3.20.20.80">
    <property type="entry name" value="Glycosidases"/>
    <property type="match status" value="1"/>
</dbReference>
<dbReference type="InterPro" id="IPR001547">
    <property type="entry name" value="Glyco_hydro_5"/>
</dbReference>
<dbReference type="InterPro" id="IPR017853">
    <property type="entry name" value="Glycoside_hydrolase_SF"/>
</dbReference>
<dbReference type="InterPro" id="IPR050386">
    <property type="entry name" value="Glycosyl_hydrolase_5"/>
</dbReference>
<dbReference type="PANTHER" id="PTHR31297:SF1">
    <property type="entry name" value="GLUCAN 1,3-BETA-GLUCOSIDASE I_II-RELATED"/>
    <property type="match status" value="1"/>
</dbReference>
<dbReference type="PANTHER" id="PTHR31297">
    <property type="entry name" value="GLUCAN ENDO-1,6-BETA-GLUCOSIDASE B"/>
    <property type="match status" value="1"/>
</dbReference>
<dbReference type="Pfam" id="PF00150">
    <property type="entry name" value="Cellulase"/>
    <property type="match status" value="1"/>
</dbReference>
<dbReference type="SUPFAM" id="SSF51445">
    <property type="entry name" value="(Trans)glycosidases"/>
    <property type="match status" value="1"/>
</dbReference>
<comment type="function">
    <text evidence="1">Beta-glucanases participate in the metabolism of beta-glucan, the main structural component of the cell wall. It could also function biosynthetically as a transglycosylase (By similarity).</text>
</comment>
<comment type="catalytic activity">
    <reaction>
        <text>Successive hydrolysis of beta-D-glucose units from the non-reducing ends of (1-&gt;3)-beta-D-glucans, releasing alpha-glucose.</text>
        <dbReference type="EC" id="3.2.1.58"/>
    </reaction>
</comment>
<comment type="cofactor">
    <cofactor evidence="1">
        <name>Mn(2+)</name>
        <dbReference type="ChEBI" id="CHEBI:29035"/>
    </cofactor>
</comment>
<comment type="subunit">
    <text evidence="1">Monomer.</text>
</comment>
<comment type="subcellular location">
    <subcellularLocation>
        <location evidence="1">Secreted</location>
    </subcellularLocation>
</comment>
<comment type="similarity">
    <text evidence="3">Belongs to the glycosyl hydrolase 5 (cellulase A) family.</text>
</comment>
<comment type="sequence caution" evidence="3">
    <conflict type="erroneous gene model prediction">
        <sequence resource="EMBL-CDS" id="CBF74803"/>
    </conflict>
</comment>
<comment type="sequence caution" evidence="3">
    <conflict type="erroneous gene model prediction">
        <sequence resource="EMBL-CDS" id="EAA59523"/>
    </conflict>
</comment>